<dbReference type="EC" id="3.6.5.-" evidence="1"/>
<dbReference type="EMBL" id="AE001363">
    <property type="protein sequence ID" value="AAD18684.1"/>
    <property type="molecule type" value="Genomic_DNA"/>
</dbReference>
<dbReference type="EMBL" id="AE002161">
    <property type="protein sequence ID" value="AAF38079.1"/>
    <property type="status" value="ALT_INIT"/>
    <property type="molecule type" value="Genomic_DNA"/>
</dbReference>
<dbReference type="EMBL" id="BA000008">
    <property type="protein sequence ID" value="BAA98750.1"/>
    <property type="molecule type" value="Genomic_DNA"/>
</dbReference>
<dbReference type="EMBL" id="AE009440">
    <property type="protein sequence ID" value="AAP98494.1"/>
    <property type="molecule type" value="Genomic_DNA"/>
</dbReference>
<dbReference type="PIR" id="A72065">
    <property type="entry name" value="A72065"/>
</dbReference>
<dbReference type="PIR" id="D86558">
    <property type="entry name" value="D86558"/>
</dbReference>
<dbReference type="RefSeq" id="NP_224740.1">
    <property type="nucleotide sequence ID" value="NC_000922.1"/>
</dbReference>
<dbReference type="SMR" id="Q9Z808"/>
<dbReference type="STRING" id="406984.CPK_ORF01058"/>
<dbReference type="GeneID" id="45050587"/>
<dbReference type="KEGG" id="cpa:CP_0208"/>
<dbReference type="KEGG" id="cpj:yhbZ"/>
<dbReference type="KEGG" id="cpn:CPn_0544"/>
<dbReference type="KEGG" id="cpt:CpB0564"/>
<dbReference type="PATRIC" id="fig|115713.3.peg.604"/>
<dbReference type="eggNOG" id="COG0536">
    <property type="taxonomic scope" value="Bacteria"/>
</dbReference>
<dbReference type="HOGENOM" id="CLU_011747_2_3_0"/>
<dbReference type="OrthoDB" id="9807318at2"/>
<dbReference type="Proteomes" id="UP000000583">
    <property type="component" value="Chromosome"/>
</dbReference>
<dbReference type="Proteomes" id="UP000000801">
    <property type="component" value="Chromosome"/>
</dbReference>
<dbReference type="GO" id="GO:0005737">
    <property type="term" value="C:cytoplasm"/>
    <property type="evidence" value="ECO:0007669"/>
    <property type="project" value="UniProtKB-SubCell"/>
</dbReference>
<dbReference type="GO" id="GO:0005525">
    <property type="term" value="F:GTP binding"/>
    <property type="evidence" value="ECO:0007669"/>
    <property type="project" value="UniProtKB-UniRule"/>
</dbReference>
<dbReference type="GO" id="GO:0003924">
    <property type="term" value="F:GTPase activity"/>
    <property type="evidence" value="ECO:0007669"/>
    <property type="project" value="UniProtKB-UniRule"/>
</dbReference>
<dbReference type="GO" id="GO:0000287">
    <property type="term" value="F:magnesium ion binding"/>
    <property type="evidence" value="ECO:0007669"/>
    <property type="project" value="InterPro"/>
</dbReference>
<dbReference type="GO" id="GO:0042254">
    <property type="term" value="P:ribosome biogenesis"/>
    <property type="evidence" value="ECO:0007669"/>
    <property type="project" value="UniProtKB-UniRule"/>
</dbReference>
<dbReference type="CDD" id="cd01898">
    <property type="entry name" value="Obg"/>
    <property type="match status" value="1"/>
</dbReference>
<dbReference type="FunFam" id="2.70.210.12:FF:000001">
    <property type="entry name" value="GTPase Obg"/>
    <property type="match status" value="1"/>
</dbReference>
<dbReference type="Gene3D" id="2.70.210.12">
    <property type="entry name" value="GTP1/OBG domain"/>
    <property type="match status" value="1"/>
</dbReference>
<dbReference type="Gene3D" id="3.40.50.300">
    <property type="entry name" value="P-loop containing nucleotide triphosphate hydrolases"/>
    <property type="match status" value="1"/>
</dbReference>
<dbReference type="HAMAP" id="MF_01454">
    <property type="entry name" value="GTPase_Obg"/>
    <property type="match status" value="1"/>
</dbReference>
<dbReference type="InterPro" id="IPR031167">
    <property type="entry name" value="G_OBG"/>
</dbReference>
<dbReference type="InterPro" id="IPR006073">
    <property type="entry name" value="GTP-bd"/>
</dbReference>
<dbReference type="InterPro" id="IPR014100">
    <property type="entry name" value="GTP-bd_Obg/CgtA"/>
</dbReference>
<dbReference type="InterPro" id="IPR006169">
    <property type="entry name" value="GTP1_OBG_dom"/>
</dbReference>
<dbReference type="InterPro" id="IPR036726">
    <property type="entry name" value="GTP1_OBG_dom_sf"/>
</dbReference>
<dbReference type="InterPro" id="IPR045086">
    <property type="entry name" value="OBG_GTPase"/>
</dbReference>
<dbReference type="InterPro" id="IPR027417">
    <property type="entry name" value="P-loop_NTPase"/>
</dbReference>
<dbReference type="InterPro" id="IPR005225">
    <property type="entry name" value="Small_GTP-bd"/>
</dbReference>
<dbReference type="NCBIfam" id="TIGR02729">
    <property type="entry name" value="Obg_CgtA"/>
    <property type="match status" value="1"/>
</dbReference>
<dbReference type="NCBIfam" id="NF008956">
    <property type="entry name" value="PRK12299.1"/>
    <property type="match status" value="1"/>
</dbReference>
<dbReference type="NCBIfam" id="TIGR00231">
    <property type="entry name" value="small_GTP"/>
    <property type="match status" value="1"/>
</dbReference>
<dbReference type="PANTHER" id="PTHR11702">
    <property type="entry name" value="DEVELOPMENTALLY REGULATED GTP-BINDING PROTEIN-RELATED"/>
    <property type="match status" value="1"/>
</dbReference>
<dbReference type="PANTHER" id="PTHR11702:SF31">
    <property type="entry name" value="MITOCHONDRIAL RIBOSOME-ASSOCIATED GTPASE 2"/>
    <property type="match status" value="1"/>
</dbReference>
<dbReference type="Pfam" id="PF01018">
    <property type="entry name" value="GTP1_OBG"/>
    <property type="match status" value="1"/>
</dbReference>
<dbReference type="Pfam" id="PF01926">
    <property type="entry name" value="MMR_HSR1"/>
    <property type="match status" value="1"/>
</dbReference>
<dbReference type="PIRSF" id="PIRSF002401">
    <property type="entry name" value="GTP_bd_Obg/CgtA"/>
    <property type="match status" value="1"/>
</dbReference>
<dbReference type="PRINTS" id="PR00326">
    <property type="entry name" value="GTP1OBG"/>
</dbReference>
<dbReference type="SUPFAM" id="SSF82051">
    <property type="entry name" value="Obg GTP-binding protein N-terminal domain"/>
    <property type="match status" value="1"/>
</dbReference>
<dbReference type="SUPFAM" id="SSF52540">
    <property type="entry name" value="P-loop containing nucleoside triphosphate hydrolases"/>
    <property type="match status" value="1"/>
</dbReference>
<dbReference type="PROSITE" id="PS51710">
    <property type="entry name" value="G_OBG"/>
    <property type="match status" value="1"/>
</dbReference>
<dbReference type="PROSITE" id="PS51883">
    <property type="entry name" value="OBG"/>
    <property type="match status" value="1"/>
</dbReference>
<gene>
    <name evidence="1" type="primary">obg</name>
    <name type="ordered locus">CPn_0544</name>
    <name type="ordered locus">CP_0208</name>
    <name type="ordered locus">CpB0564</name>
</gene>
<sequence>MFVDQITLELRAGKGGNGVVAWRKEKYLPKGGPYGGNGGNGGSVIIEATTSVYSFEAYRNIRFLKAPDGQSGATNNRTGRSGKDLIVSVPTGTLLRDAETGEILHDFTVDGERLLVSQGGKGGKGNTFFKTSVNRAPTKATPGKPGEIRQVELELKLIADIGLVGFPNAGKSTLFNTLAHTEVKVGAYPFTTLAPSLGLVLCKDRLYQKPWIIADIPGIIEGAHQNKGLGLDFLRHIERTLLLLFVIDVSKRERNSPEEDLETLIHELHSHQPDFEKKDMLVALNKIDDLLPDEQEECLQSFQKRFPSYTFVLISGLTGEGVDGLYRFFTQRLAV</sequence>
<proteinExistence type="inferred from homology"/>
<feature type="chain" id="PRO_0000385814" description="GTPase Obg">
    <location>
        <begin position="1"/>
        <end position="335"/>
    </location>
</feature>
<feature type="domain" description="Obg" evidence="2">
    <location>
        <begin position="1"/>
        <end position="158"/>
    </location>
</feature>
<feature type="domain" description="OBG-type G" evidence="1">
    <location>
        <begin position="159"/>
        <end position="334"/>
    </location>
</feature>
<feature type="region of interest" description="Disordered" evidence="3">
    <location>
        <begin position="126"/>
        <end position="145"/>
    </location>
</feature>
<feature type="binding site" evidence="1">
    <location>
        <begin position="165"/>
        <end position="172"/>
    </location>
    <ligand>
        <name>GTP</name>
        <dbReference type="ChEBI" id="CHEBI:37565"/>
    </ligand>
</feature>
<feature type="binding site" evidence="1">
    <location>
        <position position="172"/>
    </location>
    <ligand>
        <name>Mg(2+)</name>
        <dbReference type="ChEBI" id="CHEBI:18420"/>
    </ligand>
</feature>
<feature type="binding site" evidence="1">
    <location>
        <begin position="190"/>
        <end position="194"/>
    </location>
    <ligand>
        <name>GTP</name>
        <dbReference type="ChEBI" id="CHEBI:37565"/>
    </ligand>
</feature>
<feature type="binding site" evidence="1">
    <location>
        <position position="192"/>
    </location>
    <ligand>
        <name>Mg(2+)</name>
        <dbReference type="ChEBI" id="CHEBI:18420"/>
    </ligand>
</feature>
<feature type="binding site" evidence="1">
    <location>
        <begin position="215"/>
        <end position="218"/>
    </location>
    <ligand>
        <name>GTP</name>
        <dbReference type="ChEBI" id="CHEBI:37565"/>
    </ligand>
</feature>
<feature type="binding site" evidence="1">
    <location>
        <begin position="285"/>
        <end position="288"/>
    </location>
    <ligand>
        <name>GTP</name>
        <dbReference type="ChEBI" id="CHEBI:37565"/>
    </ligand>
</feature>
<feature type="binding site" evidence="1">
    <location>
        <begin position="315"/>
        <end position="317"/>
    </location>
    <ligand>
        <name>GTP</name>
        <dbReference type="ChEBI" id="CHEBI:37565"/>
    </ligand>
</feature>
<reference key="1">
    <citation type="journal article" date="1999" name="Nat. Genet.">
        <title>Comparative genomes of Chlamydia pneumoniae and C. trachomatis.</title>
        <authorList>
            <person name="Kalman S."/>
            <person name="Mitchell W.P."/>
            <person name="Marathe R."/>
            <person name="Lammel C.J."/>
            <person name="Fan J."/>
            <person name="Hyman R.W."/>
            <person name="Olinger L."/>
            <person name="Grimwood J."/>
            <person name="Davis R.W."/>
            <person name="Stephens R.S."/>
        </authorList>
    </citation>
    <scope>NUCLEOTIDE SEQUENCE [LARGE SCALE GENOMIC DNA]</scope>
    <source>
        <strain>CWL029</strain>
    </source>
</reference>
<reference key="2">
    <citation type="journal article" date="2000" name="Nucleic Acids Res.">
        <title>Genome sequences of Chlamydia trachomatis MoPn and Chlamydia pneumoniae AR39.</title>
        <authorList>
            <person name="Read T.D."/>
            <person name="Brunham R.C."/>
            <person name="Shen C."/>
            <person name="Gill S.R."/>
            <person name="Heidelberg J.F."/>
            <person name="White O."/>
            <person name="Hickey E.K."/>
            <person name="Peterson J.D."/>
            <person name="Utterback T.R."/>
            <person name="Berry K.J."/>
            <person name="Bass S."/>
            <person name="Linher K.D."/>
            <person name="Weidman J.F."/>
            <person name="Khouri H.M."/>
            <person name="Craven B."/>
            <person name="Bowman C."/>
            <person name="Dodson R.J."/>
            <person name="Gwinn M.L."/>
            <person name="Nelson W.C."/>
            <person name="DeBoy R.T."/>
            <person name="Kolonay J.F."/>
            <person name="McClarty G."/>
            <person name="Salzberg S.L."/>
            <person name="Eisen J.A."/>
            <person name="Fraser C.M."/>
        </authorList>
    </citation>
    <scope>NUCLEOTIDE SEQUENCE [LARGE SCALE GENOMIC DNA]</scope>
    <source>
        <strain>AR39</strain>
    </source>
</reference>
<reference key="3">
    <citation type="journal article" date="2000" name="Nucleic Acids Res.">
        <title>Comparison of whole genome sequences of Chlamydia pneumoniae J138 from Japan and CWL029 from USA.</title>
        <authorList>
            <person name="Shirai M."/>
            <person name="Hirakawa H."/>
            <person name="Kimoto M."/>
            <person name="Tabuchi M."/>
            <person name="Kishi F."/>
            <person name="Ouchi K."/>
            <person name="Shiba T."/>
            <person name="Ishii K."/>
            <person name="Hattori M."/>
            <person name="Kuhara S."/>
            <person name="Nakazawa T."/>
        </authorList>
    </citation>
    <scope>NUCLEOTIDE SEQUENCE [LARGE SCALE GENOMIC DNA]</scope>
    <source>
        <strain>J138</strain>
    </source>
</reference>
<reference key="4">
    <citation type="submission" date="2002-05" db="EMBL/GenBank/DDBJ databases">
        <title>The genome sequence of Chlamydia pneumoniae TW183 and comparison with other Chlamydia strains based on whole genome sequence analysis.</title>
        <authorList>
            <person name="Geng M.M."/>
            <person name="Schuhmacher A."/>
            <person name="Muehldorfer I."/>
            <person name="Bensch K.W."/>
            <person name="Schaefer K.P."/>
            <person name="Schneider S."/>
            <person name="Pohl T."/>
            <person name="Essig A."/>
            <person name="Marre R."/>
            <person name="Melchers K."/>
        </authorList>
    </citation>
    <scope>NUCLEOTIDE SEQUENCE [LARGE SCALE GENOMIC DNA]</scope>
    <source>
        <strain>TW-183</strain>
    </source>
</reference>
<comment type="function">
    <text evidence="1">An essential GTPase which binds GTP, GDP and possibly (p)ppGpp with moderate affinity, with high nucleotide exchange rates and a fairly low GTP hydrolysis rate. Plays a role in control of the cell cycle, stress response, ribosome biogenesis and in those bacteria that undergo differentiation, in morphogenesis control.</text>
</comment>
<comment type="cofactor">
    <cofactor evidence="1">
        <name>Mg(2+)</name>
        <dbReference type="ChEBI" id="CHEBI:18420"/>
    </cofactor>
</comment>
<comment type="subunit">
    <text evidence="1">Monomer.</text>
</comment>
<comment type="subcellular location">
    <subcellularLocation>
        <location evidence="1">Cytoplasm</location>
    </subcellularLocation>
</comment>
<comment type="similarity">
    <text evidence="1">Belongs to the TRAFAC class OBG-HflX-like GTPase superfamily. OBG GTPase family.</text>
</comment>
<comment type="sequence caution" evidence="4">
    <conflict type="erroneous initiation">
        <sequence resource="EMBL-CDS" id="AAF38079"/>
    </conflict>
    <text>Extended N-terminus.</text>
</comment>
<organism>
    <name type="scientific">Chlamydia pneumoniae</name>
    <name type="common">Chlamydophila pneumoniae</name>
    <dbReference type="NCBI Taxonomy" id="83558"/>
    <lineage>
        <taxon>Bacteria</taxon>
        <taxon>Pseudomonadati</taxon>
        <taxon>Chlamydiota</taxon>
        <taxon>Chlamydiia</taxon>
        <taxon>Chlamydiales</taxon>
        <taxon>Chlamydiaceae</taxon>
        <taxon>Chlamydia/Chlamydophila group</taxon>
        <taxon>Chlamydia</taxon>
    </lineage>
</organism>
<name>OBG_CHLPN</name>
<evidence type="ECO:0000255" key="1">
    <source>
        <dbReference type="HAMAP-Rule" id="MF_01454"/>
    </source>
</evidence>
<evidence type="ECO:0000255" key="2">
    <source>
        <dbReference type="PROSITE-ProRule" id="PRU01231"/>
    </source>
</evidence>
<evidence type="ECO:0000256" key="3">
    <source>
        <dbReference type="SAM" id="MobiDB-lite"/>
    </source>
</evidence>
<evidence type="ECO:0000305" key="4"/>
<keyword id="KW-0963">Cytoplasm</keyword>
<keyword id="KW-0342">GTP-binding</keyword>
<keyword id="KW-0378">Hydrolase</keyword>
<keyword id="KW-0460">Magnesium</keyword>
<keyword id="KW-0479">Metal-binding</keyword>
<keyword id="KW-0547">Nucleotide-binding</keyword>
<protein>
    <recommendedName>
        <fullName evidence="1">GTPase Obg</fullName>
        <ecNumber evidence="1">3.6.5.-</ecNumber>
    </recommendedName>
    <alternativeName>
        <fullName evidence="1">GTP-binding protein Obg</fullName>
    </alternativeName>
</protein>
<accession>Q9Z808</accession>
<accession>Q7AIL9</accession>
<accession>Q7BX91</accession>
<accession>Q9K2C3</accession>